<protein>
    <recommendedName>
        <fullName evidence="1">GTPase Era</fullName>
    </recommendedName>
</protein>
<comment type="function">
    <text evidence="1">An essential GTPase that binds both GDP and GTP, with rapid nucleotide exchange. Plays a role in 16S rRNA processing and 30S ribosomal subunit biogenesis and possibly also in cell cycle regulation and energy metabolism.</text>
</comment>
<comment type="subunit">
    <text evidence="1">Monomer.</text>
</comment>
<comment type="subcellular location">
    <subcellularLocation>
        <location>Cytoplasm</location>
    </subcellularLocation>
    <subcellularLocation>
        <location evidence="1">Cell inner membrane</location>
        <topology evidence="1">Peripheral membrane protein</topology>
    </subcellularLocation>
</comment>
<comment type="similarity">
    <text evidence="1 2">Belongs to the TRAFAC class TrmE-Era-EngA-EngB-Septin-like GTPase superfamily. Era GTPase family.</text>
</comment>
<proteinExistence type="inferred from homology"/>
<reference key="1">
    <citation type="journal article" date="2006" name="PLoS Genet.">
        <title>Genome sequence of Rickettsia bellii illuminates the role of amoebae in gene exchanges between intracellular pathogens.</title>
        <authorList>
            <person name="Ogata H."/>
            <person name="La Scola B."/>
            <person name="Audic S."/>
            <person name="Renesto P."/>
            <person name="Blanc G."/>
            <person name="Robert C."/>
            <person name="Fournier P.-E."/>
            <person name="Claverie J.-M."/>
            <person name="Raoult D."/>
        </authorList>
    </citation>
    <scope>NUCLEOTIDE SEQUENCE [LARGE SCALE GENOMIC DNA]</scope>
    <source>
        <strain>RML369-C</strain>
    </source>
</reference>
<evidence type="ECO:0000255" key="1">
    <source>
        <dbReference type="HAMAP-Rule" id="MF_00367"/>
    </source>
</evidence>
<evidence type="ECO:0000255" key="2">
    <source>
        <dbReference type="PROSITE-ProRule" id="PRU01050"/>
    </source>
</evidence>
<gene>
    <name evidence="1" type="primary">era</name>
    <name type="ordered locus">RBE_1179</name>
</gene>
<feature type="chain" id="PRO_0000277964" description="GTPase Era">
    <location>
        <begin position="1"/>
        <end position="295"/>
    </location>
</feature>
<feature type="domain" description="Era-type G" evidence="2">
    <location>
        <begin position="7"/>
        <end position="176"/>
    </location>
</feature>
<feature type="domain" description="KH type-2" evidence="1">
    <location>
        <begin position="204"/>
        <end position="281"/>
    </location>
</feature>
<feature type="region of interest" description="G1" evidence="2">
    <location>
        <begin position="15"/>
        <end position="22"/>
    </location>
</feature>
<feature type="region of interest" description="G2" evidence="2">
    <location>
        <begin position="41"/>
        <end position="45"/>
    </location>
</feature>
<feature type="region of interest" description="G3" evidence="2">
    <location>
        <begin position="62"/>
        <end position="65"/>
    </location>
</feature>
<feature type="region of interest" description="G4" evidence="2">
    <location>
        <begin position="124"/>
        <end position="127"/>
    </location>
</feature>
<feature type="region of interest" description="G5" evidence="2">
    <location>
        <begin position="152"/>
        <end position="154"/>
    </location>
</feature>
<feature type="binding site" evidence="1">
    <location>
        <begin position="15"/>
        <end position="22"/>
    </location>
    <ligand>
        <name>GTP</name>
        <dbReference type="ChEBI" id="CHEBI:37565"/>
    </ligand>
</feature>
<feature type="binding site" evidence="1">
    <location>
        <begin position="62"/>
        <end position="66"/>
    </location>
    <ligand>
        <name>GTP</name>
        <dbReference type="ChEBI" id="CHEBI:37565"/>
    </ligand>
</feature>
<feature type="binding site" evidence="1">
    <location>
        <begin position="124"/>
        <end position="127"/>
    </location>
    <ligand>
        <name>GTP</name>
        <dbReference type="ChEBI" id="CHEBI:37565"/>
    </ligand>
</feature>
<accession>Q1RHA4</accession>
<organism>
    <name type="scientific">Rickettsia bellii (strain RML369-C)</name>
    <dbReference type="NCBI Taxonomy" id="336407"/>
    <lineage>
        <taxon>Bacteria</taxon>
        <taxon>Pseudomonadati</taxon>
        <taxon>Pseudomonadota</taxon>
        <taxon>Alphaproteobacteria</taxon>
        <taxon>Rickettsiales</taxon>
        <taxon>Rickettsiaceae</taxon>
        <taxon>Rickettsieae</taxon>
        <taxon>Rickettsia</taxon>
        <taxon>belli group</taxon>
    </lineage>
</organism>
<keyword id="KW-0997">Cell inner membrane</keyword>
<keyword id="KW-1003">Cell membrane</keyword>
<keyword id="KW-0963">Cytoplasm</keyword>
<keyword id="KW-0342">GTP-binding</keyword>
<keyword id="KW-0472">Membrane</keyword>
<keyword id="KW-0547">Nucleotide-binding</keyword>
<keyword id="KW-0690">Ribosome biogenesis</keyword>
<keyword id="KW-0694">RNA-binding</keyword>
<keyword id="KW-0699">rRNA-binding</keyword>
<dbReference type="EMBL" id="CP000087">
    <property type="protein sequence ID" value="ABE05260.1"/>
    <property type="molecule type" value="Genomic_DNA"/>
</dbReference>
<dbReference type="RefSeq" id="WP_011477838.1">
    <property type="nucleotide sequence ID" value="NC_007940.1"/>
</dbReference>
<dbReference type="SMR" id="Q1RHA4"/>
<dbReference type="KEGG" id="rbe:RBE_1179"/>
<dbReference type="eggNOG" id="COG1159">
    <property type="taxonomic scope" value="Bacteria"/>
</dbReference>
<dbReference type="HOGENOM" id="CLU_038009_1_1_5"/>
<dbReference type="OrthoDB" id="9805918at2"/>
<dbReference type="Proteomes" id="UP000001951">
    <property type="component" value="Chromosome"/>
</dbReference>
<dbReference type="GO" id="GO:0005829">
    <property type="term" value="C:cytosol"/>
    <property type="evidence" value="ECO:0007669"/>
    <property type="project" value="TreeGrafter"/>
</dbReference>
<dbReference type="GO" id="GO:0005886">
    <property type="term" value="C:plasma membrane"/>
    <property type="evidence" value="ECO:0007669"/>
    <property type="project" value="UniProtKB-SubCell"/>
</dbReference>
<dbReference type="GO" id="GO:0005525">
    <property type="term" value="F:GTP binding"/>
    <property type="evidence" value="ECO:0007669"/>
    <property type="project" value="UniProtKB-UniRule"/>
</dbReference>
<dbReference type="GO" id="GO:0003924">
    <property type="term" value="F:GTPase activity"/>
    <property type="evidence" value="ECO:0007669"/>
    <property type="project" value="UniProtKB-UniRule"/>
</dbReference>
<dbReference type="GO" id="GO:0043024">
    <property type="term" value="F:ribosomal small subunit binding"/>
    <property type="evidence" value="ECO:0007669"/>
    <property type="project" value="TreeGrafter"/>
</dbReference>
<dbReference type="GO" id="GO:0070181">
    <property type="term" value="F:small ribosomal subunit rRNA binding"/>
    <property type="evidence" value="ECO:0007669"/>
    <property type="project" value="UniProtKB-UniRule"/>
</dbReference>
<dbReference type="GO" id="GO:0000028">
    <property type="term" value="P:ribosomal small subunit assembly"/>
    <property type="evidence" value="ECO:0007669"/>
    <property type="project" value="TreeGrafter"/>
</dbReference>
<dbReference type="CDD" id="cd04163">
    <property type="entry name" value="Era"/>
    <property type="match status" value="1"/>
</dbReference>
<dbReference type="CDD" id="cd22534">
    <property type="entry name" value="KH-II_Era"/>
    <property type="match status" value="1"/>
</dbReference>
<dbReference type="Gene3D" id="3.30.300.20">
    <property type="match status" value="1"/>
</dbReference>
<dbReference type="Gene3D" id="3.40.50.300">
    <property type="entry name" value="P-loop containing nucleotide triphosphate hydrolases"/>
    <property type="match status" value="1"/>
</dbReference>
<dbReference type="HAMAP" id="MF_00367">
    <property type="entry name" value="GTPase_Era"/>
    <property type="match status" value="1"/>
</dbReference>
<dbReference type="InterPro" id="IPR030388">
    <property type="entry name" value="G_ERA_dom"/>
</dbReference>
<dbReference type="InterPro" id="IPR006073">
    <property type="entry name" value="GTP-bd"/>
</dbReference>
<dbReference type="InterPro" id="IPR005662">
    <property type="entry name" value="GTPase_Era-like"/>
</dbReference>
<dbReference type="InterPro" id="IPR015946">
    <property type="entry name" value="KH_dom-like_a/b"/>
</dbReference>
<dbReference type="InterPro" id="IPR004044">
    <property type="entry name" value="KH_dom_type_2"/>
</dbReference>
<dbReference type="InterPro" id="IPR009019">
    <property type="entry name" value="KH_sf_prok-type"/>
</dbReference>
<dbReference type="InterPro" id="IPR027417">
    <property type="entry name" value="P-loop_NTPase"/>
</dbReference>
<dbReference type="InterPro" id="IPR005225">
    <property type="entry name" value="Small_GTP-bd"/>
</dbReference>
<dbReference type="NCBIfam" id="TIGR00436">
    <property type="entry name" value="era"/>
    <property type="match status" value="1"/>
</dbReference>
<dbReference type="NCBIfam" id="NF000908">
    <property type="entry name" value="PRK00089.1"/>
    <property type="match status" value="1"/>
</dbReference>
<dbReference type="NCBIfam" id="TIGR00231">
    <property type="entry name" value="small_GTP"/>
    <property type="match status" value="1"/>
</dbReference>
<dbReference type="PANTHER" id="PTHR42698">
    <property type="entry name" value="GTPASE ERA"/>
    <property type="match status" value="1"/>
</dbReference>
<dbReference type="PANTHER" id="PTHR42698:SF1">
    <property type="entry name" value="GTPASE ERA, MITOCHONDRIAL"/>
    <property type="match status" value="1"/>
</dbReference>
<dbReference type="Pfam" id="PF07650">
    <property type="entry name" value="KH_2"/>
    <property type="match status" value="1"/>
</dbReference>
<dbReference type="Pfam" id="PF01926">
    <property type="entry name" value="MMR_HSR1"/>
    <property type="match status" value="1"/>
</dbReference>
<dbReference type="SUPFAM" id="SSF52540">
    <property type="entry name" value="P-loop containing nucleoside triphosphate hydrolases"/>
    <property type="match status" value="1"/>
</dbReference>
<dbReference type="SUPFAM" id="SSF54814">
    <property type="entry name" value="Prokaryotic type KH domain (KH-domain type II)"/>
    <property type="match status" value="1"/>
</dbReference>
<dbReference type="PROSITE" id="PS51713">
    <property type="entry name" value="G_ERA"/>
    <property type="match status" value="1"/>
</dbReference>
<dbReference type="PROSITE" id="PS50823">
    <property type="entry name" value="KH_TYPE_2"/>
    <property type="match status" value="1"/>
</dbReference>
<name>ERA_RICBR</name>
<sequence length="295" mass="33700">MTKQIQKTVSVCIIGRPNSGKSTLLNRIIGEKLSIVTPKVQTTRSIITGIITLNDTQIILYDTPGIFEPKGTLEKAMVRCAWSSLHSADIVMLIIDSLKPLDSITHDILNKLRSLNVVPVFLLNKIDVESKYIDDTKAFLAENYSDSLLFPISAISGENVDKLLEYITSKAKIAPWLYEEDDITDLPMRFIAAEITREQLFLGLQQELPYKLTVQTEKWEELKDKSVKINQIIVVSRESYKTIILGKNGSKIKELGAKSRMQMQQFFGFPVHLFLFVKVQELWEDNSDYYEYMKI</sequence>